<gene>
    <name evidence="1" type="primary">dapB</name>
    <name type="ordered locus">XAC1860</name>
</gene>
<proteinExistence type="inferred from homology"/>
<keyword id="KW-0028">Amino-acid biosynthesis</keyword>
<keyword id="KW-0963">Cytoplasm</keyword>
<keyword id="KW-0220">Diaminopimelate biosynthesis</keyword>
<keyword id="KW-0457">Lysine biosynthesis</keyword>
<keyword id="KW-0520">NAD</keyword>
<keyword id="KW-0521">NADP</keyword>
<keyword id="KW-0560">Oxidoreductase</keyword>
<comment type="function">
    <text evidence="1">Catalyzes the conversion of 4-hydroxy-tetrahydrodipicolinate (HTPA) to tetrahydrodipicolinate.</text>
</comment>
<comment type="catalytic activity">
    <reaction evidence="1">
        <text>(S)-2,3,4,5-tetrahydrodipicolinate + NAD(+) + H2O = (2S,4S)-4-hydroxy-2,3,4,5-tetrahydrodipicolinate + NADH + H(+)</text>
        <dbReference type="Rhea" id="RHEA:35323"/>
        <dbReference type="ChEBI" id="CHEBI:15377"/>
        <dbReference type="ChEBI" id="CHEBI:15378"/>
        <dbReference type="ChEBI" id="CHEBI:16845"/>
        <dbReference type="ChEBI" id="CHEBI:57540"/>
        <dbReference type="ChEBI" id="CHEBI:57945"/>
        <dbReference type="ChEBI" id="CHEBI:67139"/>
        <dbReference type="EC" id="1.17.1.8"/>
    </reaction>
</comment>
<comment type="catalytic activity">
    <reaction evidence="1">
        <text>(S)-2,3,4,5-tetrahydrodipicolinate + NADP(+) + H2O = (2S,4S)-4-hydroxy-2,3,4,5-tetrahydrodipicolinate + NADPH + H(+)</text>
        <dbReference type="Rhea" id="RHEA:35331"/>
        <dbReference type="ChEBI" id="CHEBI:15377"/>
        <dbReference type="ChEBI" id="CHEBI:15378"/>
        <dbReference type="ChEBI" id="CHEBI:16845"/>
        <dbReference type="ChEBI" id="CHEBI:57783"/>
        <dbReference type="ChEBI" id="CHEBI:58349"/>
        <dbReference type="ChEBI" id="CHEBI:67139"/>
        <dbReference type="EC" id="1.17.1.8"/>
    </reaction>
</comment>
<comment type="pathway">
    <text evidence="1">Amino-acid biosynthesis; L-lysine biosynthesis via DAP pathway; (S)-tetrahydrodipicolinate from L-aspartate: step 4/4.</text>
</comment>
<comment type="subcellular location">
    <subcellularLocation>
        <location evidence="1">Cytoplasm</location>
    </subcellularLocation>
</comment>
<comment type="similarity">
    <text evidence="1">Belongs to the DapB family.</text>
</comment>
<comment type="caution">
    <text evidence="2">Was originally thought to be a dihydrodipicolinate reductase (DHDPR), catalyzing the conversion of dihydrodipicolinate to tetrahydrodipicolinate. However, it was shown in E.coli that the substrate of the enzymatic reaction is not dihydrodipicolinate (DHDP) but in fact (2S,4S)-4-hydroxy-2,3,4,5-tetrahydrodipicolinic acid (HTPA), the product released by the DapA-catalyzed reaction.</text>
</comment>
<name>DAPB_XANAC</name>
<evidence type="ECO:0000255" key="1">
    <source>
        <dbReference type="HAMAP-Rule" id="MF_00102"/>
    </source>
</evidence>
<evidence type="ECO:0000305" key="2"/>
<accession>Q8PLE0</accession>
<sequence>MTTSAVKVLIHGASGRMGKALLRLAAEDQTLQVVGAVVGRSPSQRVVDGVPFFAASELGGAPAFDVAIDFSLPQGFAPILALCAQRGKPLVSGTTGLDEAQRAALRDAAQQIALVWASNFSLGVAVLTELVERAAGTLPGWDCDILESHHVHKQDAPSGTALTLGEAATGSGAQPRYVSLRAGDIVGEHTVQFTGLGERVELVHRATNRDIFARGALHAAKRLIGKPAGSYRVRDLVL</sequence>
<protein>
    <recommendedName>
        <fullName evidence="1">4-hydroxy-tetrahydrodipicolinate reductase</fullName>
        <shortName evidence="1">HTPA reductase</shortName>
        <ecNumber evidence="1">1.17.1.8</ecNumber>
    </recommendedName>
</protein>
<organism>
    <name type="scientific">Xanthomonas axonopodis pv. citri (strain 306)</name>
    <dbReference type="NCBI Taxonomy" id="190486"/>
    <lineage>
        <taxon>Bacteria</taxon>
        <taxon>Pseudomonadati</taxon>
        <taxon>Pseudomonadota</taxon>
        <taxon>Gammaproteobacteria</taxon>
        <taxon>Lysobacterales</taxon>
        <taxon>Lysobacteraceae</taxon>
        <taxon>Xanthomonas</taxon>
    </lineage>
</organism>
<dbReference type="EC" id="1.17.1.8" evidence="1"/>
<dbReference type="EMBL" id="AE008923">
    <property type="protein sequence ID" value="AAM36722.1"/>
    <property type="molecule type" value="Genomic_DNA"/>
</dbReference>
<dbReference type="RefSeq" id="WP_005915418.1">
    <property type="nucleotide sequence ID" value="NC_003919.1"/>
</dbReference>
<dbReference type="SMR" id="Q8PLE0"/>
<dbReference type="GeneID" id="66911006"/>
<dbReference type="KEGG" id="xac:XAC1860"/>
<dbReference type="eggNOG" id="COG0289">
    <property type="taxonomic scope" value="Bacteria"/>
</dbReference>
<dbReference type="HOGENOM" id="CLU_047479_2_1_6"/>
<dbReference type="UniPathway" id="UPA00034">
    <property type="reaction ID" value="UER00018"/>
</dbReference>
<dbReference type="Proteomes" id="UP000000576">
    <property type="component" value="Chromosome"/>
</dbReference>
<dbReference type="GO" id="GO:0005829">
    <property type="term" value="C:cytosol"/>
    <property type="evidence" value="ECO:0007669"/>
    <property type="project" value="TreeGrafter"/>
</dbReference>
<dbReference type="GO" id="GO:0008839">
    <property type="term" value="F:4-hydroxy-tetrahydrodipicolinate reductase"/>
    <property type="evidence" value="ECO:0007669"/>
    <property type="project" value="UniProtKB-EC"/>
</dbReference>
<dbReference type="GO" id="GO:0051287">
    <property type="term" value="F:NAD binding"/>
    <property type="evidence" value="ECO:0007669"/>
    <property type="project" value="UniProtKB-UniRule"/>
</dbReference>
<dbReference type="GO" id="GO:0050661">
    <property type="term" value="F:NADP binding"/>
    <property type="evidence" value="ECO:0007669"/>
    <property type="project" value="UniProtKB-UniRule"/>
</dbReference>
<dbReference type="GO" id="GO:0016726">
    <property type="term" value="F:oxidoreductase activity, acting on CH or CH2 groups, NAD or NADP as acceptor"/>
    <property type="evidence" value="ECO:0007669"/>
    <property type="project" value="UniProtKB-UniRule"/>
</dbReference>
<dbReference type="GO" id="GO:0019877">
    <property type="term" value="P:diaminopimelate biosynthetic process"/>
    <property type="evidence" value="ECO:0007669"/>
    <property type="project" value="UniProtKB-UniRule"/>
</dbReference>
<dbReference type="GO" id="GO:0009089">
    <property type="term" value="P:lysine biosynthetic process via diaminopimelate"/>
    <property type="evidence" value="ECO:0007669"/>
    <property type="project" value="UniProtKB-UniRule"/>
</dbReference>
<dbReference type="CDD" id="cd02274">
    <property type="entry name" value="DHDPR_N"/>
    <property type="match status" value="1"/>
</dbReference>
<dbReference type="Gene3D" id="3.30.360.10">
    <property type="entry name" value="Dihydrodipicolinate Reductase, domain 2"/>
    <property type="match status" value="1"/>
</dbReference>
<dbReference type="Gene3D" id="3.40.50.720">
    <property type="entry name" value="NAD(P)-binding Rossmann-like Domain"/>
    <property type="match status" value="1"/>
</dbReference>
<dbReference type="HAMAP" id="MF_00102">
    <property type="entry name" value="DapB"/>
    <property type="match status" value="1"/>
</dbReference>
<dbReference type="InterPro" id="IPR022663">
    <property type="entry name" value="DapB_C"/>
</dbReference>
<dbReference type="InterPro" id="IPR000846">
    <property type="entry name" value="DapB_N"/>
</dbReference>
<dbReference type="InterPro" id="IPR022664">
    <property type="entry name" value="DapB_N_CS"/>
</dbReference>
<dbReference type="InterPro" id="IPR023940">
    <property type="entry name" value="DHDPR_bac"/>
</dbReference>
<dbReference type="InterPro" id="IPR036291">
    <property type="entry name" value="NAD(P)-bd_dom_sf"/>
</dbReference>
<dbReference type="NCBIfam" id="TIGR00036">
    <property type="entry name" value="dapB"/>
    <property type="match status" value="1"/>
</dbReference>
<dbReference type="PANTHER" id="PTHR20836:SF0">
    <property type="entry name" value="4-HYDROXY-TETRAHYDRODIPICOLINATE REDUCTASE 1, CHLOROPLASTIC-RELATED"/>
    <property type="match status" value="1"/>
</dbReference>
<dbReference type="PANTHER" id="PTHR20836">
    <property type="entry name" value="DIHYDRODIPICOLINATE REDUCTASE"/>
    <property type="match status" value="1"/>
</dbReference>
<dbReference type="Pfam" id="PF05173">
    <property type="entry name" value="DapB_C"/>
    <property type="match status" value="1"/>
</dbReference>
<dbReference type="Pfam" id="PF01113">
    <property type="entry name" value="DapB_N"/>
    <property type="match status" value="1"/>
</dbReference>
<dbReference type="PIRSF" id="PIRSF000161">
    <property type="entry name" value="DHPR"/>
    <property type="match status" value="1"/>
</dbReference>
<dbReference type="SUPFAM" id="SSF55347">
    <property type="entry name" value="Glyceraldehyde-3-phosphate dehydrogenase-like, C-terminal domain"/>
    <property type="match status" value="1"/>
</dbReference>
<dbReference type="SUPFAM" id="SSF51735">
    <property type="entry name" value="NAD(P)-binding Rossmann-fold domains"/>
    <property type="match status" value="1"/>
</dbReference>
<dbReference type="PROSITE" id="PS01298">
    <property type="entry name" value="DAPB"/>
    <property type="match status" value="1"/>
</dbReference>
<feature type="chain" id="PRO_0000141510" description="4-hydroxy-tetrahydrodipicolinate reductase">
    <location>
        <begin position="1"/>
        <end position="238"/>
    </location>
</feature>
<feature type="active site" description="Proton donor/acceptor" evidence="1">
    <location>
        <position position="149"/>
    </location>
</feature>
<feature type="active site" description="Proton donor" evidence="1">
    <location>
        <position position="153"/>
    </location>
</feature>
<feature type="binding site" evidence="1">
    <location>
        <begin position="12"/>
        <end position="17"/>
    </location>
    <ligand>
        <name>NAD(+)</name>
        <dbReference type="ChEBI" id="CHEBI:57540"/>
    </ligand>
</feature>
<feature type="binding site" evidence="1">
    <location>
        <position position="40"/>
    </location>
    <ligand>
        <name>NADP(+)</name>
        <dbReference type="ChEBI" id="CHEBI:58349"/>
    </ligand>
</feature>
<feature type="binding site" evidence="1">
    <location>
        <begin position="93"/>
        <end position="95"/>
    </location>
    <ligand>
        <name>NAD(+)</name>
        <dbReference type="ChEBI" id="CHEBI:57540"/>
    </ligand>
</feature>
<feature type="binding site" evidence="1">
    <location>
        <begin position="117"/>
        <end position="120"/>
    </location>
    <ligand>
        <name>NAD(+)</name>
        <dbReference type="ChEBI" id="CHEBI:57540"/>
    </ligand>
</feature>
<feature type="binding site" evidence="1">
    <location>
        <position position="150"/>
    </location>
    <ligand>
        <name>(S)-2,3,4,5-tetrahydrodipicolinate</name>
        <dbReference type="ChEBI" id="CHEBI:16845"/>
    </ligand>
</feature>
<feature type="binding site" evidence="1">
    <location>
        <begin position="159"/>
        <end position="160"/>
    </location>
    <ligand>
        <name>(S)-2,3,4,5-tetrahydrodipicolinate</name>
        <dbReference type="ChEBI" id="CHEBI:16845"/>
    </ligand>
</feature>
<reference key="1">
    <citation type="journal article" date="2002" name="Nature">
        <title>Comparison of the genomes of two Xanthomonas pathogens with differing host specificities.</title>
        <authorList>
            <person name="da Silva A.C.R."/>
            <person name="Ferro J.A."/>
            <person name="Reinach F.C."/>
            <person name="Farah C.S."/>
            <person name="Furlan L.R."/>
            <person name="Quaggio R.B."/>
            <person name="Monteiro-Vitorello C.B."/>
            <person name="Van Sluys M.A."/>
            <person name="Almeida N.F. Jr."/>
            <person name="Alves L.M.C."/>
            <person name="do Amaral A.M."/>
            <person name="Bertolini M.C."/>
            <person name="Camargo L.E.A."/>
            <person name="Camarotte G."/>
            <person name="Cannavan F."/>
            <person name="Cardozo J."/>
            <person name="Chambergo F."/>
            <person name="Ciapina L.P."/>
            <person name="Cicarelli R.M.B."/>
            <person name="Coutinho L.L."/>
            <person name="Cursino-Santos J.R."/>
            <person name="El-Dorry H."/>
            <person name="Faria J.B."/>
            <person name="Ferreira A.J.S."/>
            <person name="Ferreira R.C.C."/>
            <person name="Ferro M.I.T."/>
            <person name="Formighieri E.F."/>
            <person name="Franco M.C."/>
            <person name="Greggio C.C."/>
            <person name="Gruber A."/>
            <person name="Katsuyama A.M."/>
            <person name="Kishi L.T."/>
            <person name="Leite R.P."/>
            <person name="Lemos E.G.M."/>
            <person name="Lemos M.V.F."/>
            <person name="Locali E.C."/>
            <person name="Machado M.A."/>
            <person name="Madeira A.M.B.N."/>
            <person name="Martinez-Rossi N.M."/>
            <person name="Martins E.C."/>
            <person name="Meidanis J."/>
            <person name="Menck C.F.M."/>
            <person name="Miyaki C.Y."/>
            <person name="Moon D.H."/>
            <person name="Moreira L.M."/>
            <person name="Novo M.T.M."/>
            <person name="Okura V.K."/>
            <person name="Oliveira M.C."/>
            <person name="Oliveira V.R."/>
            <person name="Pereira H.A."/>
            <person name="Rossi A."/>
            <person name="Sena J.A.D."/>
            <person name="Silva C."/>
            <person name="de Souza R.F."/>
            <person name="Spinola L.A.F."/>
            <person name="Takita M.A."/>
            <person name="Tamura R.E."/>
            <person name="Teixeira E.C."/>
            <person name="Tezza R.I.D."/>
            <person name="Trindade dos Santos M."/>
            <person name="Truffi D."/>
            <person name="Tsai S.M."/>
            <person name="White F.F."/>
            <person name="Setubal J.C."/>
            <person name="Kitajima J.P."/>
        </authorList>
    </citation>
    <scope>NUCLEOTIDE SEQUENCE [LARGE SCALE GENOMIC DNA]</scope>
    <source>
        <strain>306</strain>
    </source>
</reference>